<evidence type="ECO:0000255" key="1">
    <source>
        <dbReference type="HAMAP-Rule" id="MF_00305"/>
    </source>
</evidence>
<dbReference type="EMBL" id="CP000505">
    <property type="protein sequence ID" value="ABL77768.1"/>
    <property type="molecule type" value="Genomic_DNA"/>
</dbReference>
<dbReference type="RefSeq" id="WP_011752033.1">
    <property type="nucleotide sequence ID" value="NC_008698.1"/>
</dbReference>
<dbReference type="SMR" id="A1RX38"/>
<dbReference type="STRING" id="368408.Tpen_0359"/>
<dbReference type="EnsemblBacteria" id="ABL77768">
    <property type="protein sequence ID" value="ABL77768"/>
    <property type="gene ID" value="Tpen_0359"/>
</dbReference>
<dbReference type="GeneID" id="4600897"/>
<dbReference type="KEGG" id="tpe:Tpen_0359"/>
<dbReference type="eggNOG" id="arCOG01217">
    <property type="taxonomic scope" value="Archaea"/>
</dbReference>
<dbReference type="HOGENOM" id="CLU_169299_1_0_2"/>
<dbReference type="OrthoDB" id="56356at2157"/>
<dbReference type="Proteomes" id="UP000000641">
    <property type="component" value="Chromosome"/>
</dbReference>
<dbReference type="GO" id="GO:0048500">
    <property type="term" value="C:signal recognition particle"/>
    <property type="evidence" value="ECO:0007669"/>
    <property type="project" value="UniProtKB-UniRule"/>
</dbReference>
<dbReference type="GO" id="GO:0008312">
    <property type="term" value="F:7S RNA binding"/>
    <property type="evidence" value="ECO:0007669"/>
    <property type="project" value="UniProtKB-UniRule"/>
</dbReference>
<dbReference type="GO" id="GO:0006617">
    <property type="term" value="P:SRP-dependent cotranslational protein targeting to membrane, signal sequence recognition"/>
    <property type="evidence" value="ECO:0007669"/>
    <property type="project" value="TreeGrafter"/>
</dbReference>
<dbReference type="Gene3D" id="3.30.56.30">
    <property type="entry name" value="Signal recognition particle, SRP19-like subunit"/>
    <property type="match status" value="1"/>
</dbReference>
<dbReference type="HAMAP" id="MF_00305">
    <property type="entry name" value="SRP19"/>
    <property type="match status" value="1"/>
</dbReference>
<dbReference type="InterPro" id="IPR002778">
    <property type="entry name" value="Signal_recog_particle_SRP19"/>
</dbReference>
<dbReference type="InterPro" id="IPR036521">
    <property type="entry name" value="SRP19-like_sf"/>
</dbReference>
<dbReference type="InterPro" id="IPR022938">
    <property type="entry name" value="SRP19_arc-type"/>
</dbReference>
<dbReference type="PANTHER" id="PTHR17453">
    <property type="entry name" value="SIGNAL RECOGNITION PARTICLE 19 KD PROTEIN"/>
    <property type="match status" value="1"/>
</dbReference>
<dbReference type="PANTHER" id="PTHR17453:SF0">
    <property type="entry name" value="SIGNAL RECOGNITION PARTICLE 19 KDA PROTEIN"/>
    <property type="match status" value="1"/>
</dbReference>
<dbReference type="Pfam" id="PF01922">
    <property type="entry name" value="SRP19"/>
    <property type="match status" value="1"/>
</dbReference>
<dbReference type="SUPFAM" id="SSF69695">
    <property type="entry name" value="SRP19"/>
    <property type="match status" value="1"/>
</dbReference>
<feature type="chain" id="PRO_0000300754" description="Signal recognition particle 19 kDa protein">
    <location>
        <begin position="1"/>
        <end position="101"/>
    </location>
</feature>
<proteinExistence type="inferred from homology"/>
<comment type="function">
    <text evidence="1">Involved in targeting and insertion of nascent membrane proteins into the cytoplasmic membrane. Binds directly to 7S RNA and mediates binding of the 54 kDa subunit of the SRP.</text>
</comment>
<comment type="subunit">
    <text evidence="1">Part of the signal recognition particle protein translocation system, which is composed of SRP and FtsY. Archaeal SRP consists of a 7S RNA molecule of 300 nucleotides and two protein subunits: SRP54 and SRP19.</text>
</comment>
<comment type="subcellular location">
    <subcellularLocation>
        <location evidence="1">Cytoplasm</location>
    </subcellularLocation>
</comment>
<comment type="similarity">
    <text evidence="1">Belongs to the SRP19 family.</text>
</comment>
<reference key="1">
    <citation type="journal article" date="2008" name="J. Bacteriol.">
        <title>Genome sequence of Thermofilum pendens reveals an exceptional loss of biosynthetic pathways without genome reduction.</title>
        <authorList>
            <person name="Anderson I."/>
            <person name="Rodriguez J."/>
            <person name="Susanti D."/>
            <person name="Porat I."/>
            <person name="Reich C."/>
            <person name="Ulrich L.E."/>
            <person name="Elkins J.G."/>
            <person name="Mavromatis K."/>
            <person name="Lykidis A."/>
            <person name="Kim E."/>
            <person name="Thompson L.S."/>
            <person name="Nolan M."/>
            <person name="Land M."/>
            <person name="Copeland A."/>
            <person name="Lapidus A."/>
            <person name="Lucas S."/>
            <person name="Detter C."/>
            <person name="Zhulin I.B."/>
            <person name="Olsen G.J."/>
            <person name="Whitman W."/>
            <person name="Mukhopadhyay B."/>
            <person name="Bristow J."/>
            <person name="Kyrpides N."/>
        </authorList>
    </citation>
    <scope>NUCLEOTIDE SEQUENCE [LARGE SCALE GENOMIC DNA]</scope>
    <source>
        <strain>DSM 2475 / Hrk 5</strain>
    </source>
</reference>
<gene>
    <name evidence="1" type="primary">srp19</name>
    <name type="ordered locus">Tpen_0359</name>
</gene>
<sequence length="101" mass="11940">MLKKNGFIVWPVYFDSTKPRKWRRVPRKLAVEKPTLSEIVEAVKREGFSFTVEENAKHPAYWYEVQGRVIVQANVKKSVLLKKIAENLQKIRAEQSSKRRR</sequence>
<protein>
    <recommendedName>
        <fullName evidence="1">Signal recognition particle 19 kDa protein</fullName>
        <shortName evidence="1">SRP19</shortName>
    </recommendedName>
</protein>
<name>SRP19_THEPD</name>
<accession>A1RX38</accession>
<organism>
    <name type="scientific">Thermofilum pendens (strain DSM 2475 / Hrk 5)</name>
    <dbReference type="NCBI Taxonomy" id="368408"/>
    <lineage>
        <taxon>Archaea</taxon>
        <taxon>Thermoproteota</taxon>
        <taxon>Thermoprotei</taxon>
        <taxon>Thermofilales</taxon>
        <taxon>Thermofilaceae</taxon>
        <taxon>Thermofilum</taxon>
    </lineage>
</organism>
<keyword id="KW-0963">Cytoplasm</keyword>
<keyword id="KW-1185">Reference proteome</keyword>
<keyword id="KW-0687">Ribonucleoprotein</keyword>
<keyword id="KW-0694">RNA-binding</keyword>
<keyword id="KW-0733">Signal recognition particle</keyword>